<dbReference type="EC" id="4.2.1.10" evidence="1"/>
<dbReference type="EMBL" id="CP000747">
    <property type="protein sequence ID" value="ACG78260.1"/>
    <property type="molecule type" value="Genomic_DNA"/>
</dbReference>
<dbReference type="RefSeq" id="WP_012522402.1">
    <property type="nucleotide sequence ID" value="NC_011144.1"/>
</dbReference>
<dbReference type="SMR" id="B4RCS3"/>
<dbReference type="STRING" id="450851.PHZ_c1849"/>
<dbReference type="KEGG" id="pzu:PHZ_c1849"/>
<dbReference type="eggNOG" id="COG0757">
    <property type="taxonomic scope" value="Bacteria"/>
</dbReference>
<dbReference type="HOGENOM" id="CLU_090968_2_0_5"/>
<dbReference type="OrthoDB" id="9790793at2"/>
<dbReference type="UniPathway" id="UPA00053">
    <property type="reaction ID" value="UER00086"/>
</dbReference>
<dbReference type="Proteomes" id="UP000001868">
    <property type="component" value="Chromosome"/>
</dbReference>
<dbReference type="GO" id="GO:0003855">
    <property type="term" value="F:3-dehydroquinate dehydratase activity"/>
    <property type="evidence" value="ECO:0007669"/>
    <property type="project" value="UniProtKB-UniRule"/>
</dbReference>
<dbReference type="GO" id="GO:0008652">
    <property type="term" value="P:amino acid biosynthetic process"/>
    <property type="evidence" value="ECO:0007669"/>
    <property type="project" value="UniProtKB-KW"/>
</dbReference>
<dbReference type="GO" id="GO:0009073">
    <property type="term" value="P:aromatic amino acid family biosynthetic process"/>
    <property type="evidence" value="ECO:0007669"/>
    <property type="project" value="UniProtKB-KW"/>
</dbReference>
<dbReference type="GO" id="GO:0009423">
    <property type="term" value="P:chorismate biosynthetic process"/>
    <property type="evidence" value="ECO:0007669"/>
    <property type="project" value="UniProtKB-UniRule"/>
</dbReference>
<dbReference type="GO" id="GO:0019631">
    <property type="term" value="P:quinate catabolic process"/>
    <property type="evidence" value="ECO:0007669"/>
    <property type="project" value="TreeGrafter"/>
</dbReference>
<dbReference type="CDD" id="cd00466">
    <property type="entry name" value="DHQase_II"/>
    <property type="match status" value="1"/>
</dbReference>
<dbReference type="Gene3D" id="3.40.50.9100">
    <property type="entry name" value="Dehydroquinase, class II"/>
    <property type="match status" value="1"/>
</dbReference>
<dbReference type="HAMAP" id="MF_00169">
    <property type="entry name" value="AroQ"/>
    <property type="match status" value="1"/>
</dbReference>
<dbReference type="InterPro" id="IPR001874">
    <property type="entry name" value="DHquinase_II"/>
</dbReference>
<dbReference type="InterPro" id="IPR018509">
    <property type="entry name" value="DHquinase_II_CS"/>
</dbReference>
<dbReference type="InterPro" id="IPR036441">
    <property type="entry name" value="DHquinase_II_sf"/>
</dbReference>
<dbReference type="NCBIfam" id="TIGR01088">
    <property type="entry name" value="aroQ"/>
    <property type="match status" value="1"/>
</dbReference>
<dbReference type="NCBIfam" id="NF003805">
    <property type="entry name" value="PRK05395.1-2"/>
    <property type="match status" value="1"/>
</dbReference>
<dbReference type="NCBIfam" id="NF003806">
    <property type="entry name" value="PRK05395.1-3"/>
    <property type="match status" value="1"/>
</dbReference>
<dbReference type="NCBIfam" id="NF003807">
    <property type="entry name" value="PRK05395.1-4"/>
    <property type="match status" value="1"/>
</dbReference>
<dbReference type="PANTHER" id="PTHR21272">
    <property type="entry name" value="CATABOLIC 3-DEHYDROQUINASE"/>
    <property type="match status" value="1"/>
</dbReference>
<dbReference type="PANTHER" id="PTHR21272:SF3">
    <property type="entry name" value="CATABOLIC 3-DEHYDROQUINASE"/>
    <property type="match status" value="1"/>
</dbReference>
<dbReference type="Pfam" id="PF01220">
    <property type="entry name" value="DHquinase_II"/>
    <property type="match status" value="1"/>
</dbReference>
<dbReference type="PIRSF" id="PIRSF001399">
    <property type="entry name" value="DHquinase_II"/>
    <property type="match status" value="1"/>
</dbReference>
<dbReference type="SUPFAM" id="SSF52304">
    <property type="entry name" value="Type II 3-dehydroquinate dehydratase"/>
    <property type="match status" value="1"/>
</dbReference>
<dbReference type="PROSITE" id="PS01029">
    <property type="entry name" value="DEHYDROQUINASE_II"/>
    <property type="match status" value="1"/>
</dbReference>
<gene>
    <name evidence="1" type="primary">aroQ</name>
    <name type="ordered locus">PHZ_c1849</name>
</gene>
<evidence type="ECO:0000255" key="1">
    <source>
        <dbReference type="HAMAP-Rule" id="MF_00169"/>
    </source>
</evidence>
<feature type="chain" id="PRO_1000097612" description="3-dehydroquinate dehydratase">
    <location>
        <begin position="1"/>
        <end position="145"/>
    </location>
</feature>
<feature type="active site" description="Proton acceptor" evidence="1">
    <location>
        <position position="24"/>
    </location>
</feature>
<feature type="active site" description="Proton donor" evidence="1">
    <location>
        <position position="101"/>
    </location>
</feature>
<feature type="binding site" evidence="1">
    <location>
        <position position="75"/>
    </location>
    <ligand>
        <name>substrate</name>
    </ligand>
</feature>
<feature type="binding site" evidence="1">
    <location>
        <position position="81"/>
    </location>
    <ligand>
        <name>substrate</name>
    </ligand>
</feature>
<feature type="binding site" evidence="1">
    <location>
        <position position="88"/>
    </location>
    <ligand>
        <name>substrate</name>
    </ligand>
</feature>
<feature type="binding site" evidence="1">
    <location>
        <begin position="102"/>
        <end position="103"/>
    </location>
    <ligand>
        <name>substrate</name>
    </ligand>
</feature>
<feature type="binding site" evidence="1">
    <location>
        <position position="112"/>
    </location>
    <ligand>
        <name>substrate</name>
    </ligand>
</feature>
<feature type="site" description="Transition state stabilizer" evidence="1">
    <location>
        <position position="19"/>
    </location>
</feature>
<proteinExistence type="inferred from homology"/>
<organism>
    <name type="scientific">Phenylobacterium zucineum (strain HLK1)</name>
    <dbReference type="NCBI Taxonomy" id="450851"/>
    <lineage>
        <taxon>Bacteria</taxon>
        <taxon>Pseudomonadati</taxon>
        <taxon>Pseudomonadota</taxon>
        <taxon>Alphaproteobacteria</taxon>
        <taxon>Caulobacterales</taxon>
        <taxon>Caulobacteraceae</taxon>
        <taxon>Phenylobacterium</taxon>
    </lineage>
</organism>
<reference key="1">
    <citation type="journal article" date="2008" name="BMC Genomics">
        <title>Complete genome of Phenylobacterium zucineum - a novel facultative intracellular bacterium isolated from human erythroleukemia cell line K562.</title>
        <authorList>
            <person name="Luo Y."/>
            <person name="Xu X."/>
            <person name="Ding Z."/>
            <person name="Liu Z."/>
            <person name="Zhang B."/>
            <person name="Yan Z."/>
            <person name="Sun J."/>
            <person name="Hu S."/>
            <person name="Hu X."/>
        </authorList>
    </citation>
    <scope>NUCLEOTIDE SEQUENCE [LARGE SCALE GENOMIC DNA]</scope>
    <source>
        <strain>HLK1</strain>
    </source>
</reference>
<keyword id="KW-0028">Amino-acid biosynthesis</keyword>
<keyword id="KW-0057">Aromatic amino acid biosynthesis</keyword>
<keyword id="KW-0456">Lyase</keyword>
<keyword id="KW-1185">Reference proteome</keyword>
<comment type="function">
    <text evidence="1">Catalyzes a trans-dehydration via an enolate intermediate.</text>
</comment>
<comment type="catalytic activity">
    <reaction evidence="1">
        <text>3-dehydroquinate = 3-dehydroshikimate + H2O</text>
        <dbReference type="Rhea" id="RHEA:21096"/>
        <dbReference type="ChEBI" id="CHEBI:15377"/>
        <dbReference type="ChEBI" id="CHEBI:16630"/>
        <dbReference type="ChEBI" id="CHEBI:32364"/>
        <dbReference type="EC" id="4.2.1.10"/>
    </reaction>
</comment>
<comment type="pathway">
    <text evidence="1">Metabolic intermediate biosynthesis; chorismate biosynthesis; chorismate from D-erythrose 4-phosphate and phosphoenolpyruvate: step 3/7.</text>
</comment>
<comment type="subunit">
    <text evidence="1">Homododecamer.</text>
</comment>
<comment type="similarity">
    <text evidence="1">Belongs to the type-II 3-dehydroquinase family.</text>
</comment>
<sequence length="145" mass="15646">MSKPIYVLSGPNLNLLGTREPEIYGHQTLDDVRRLCEARAKSLGREIVFRQSNHEGELIDWIQEAREKACALVINPAGYGHTSVAILDALKAVGLPVVECHLSNPAARETFRRKTYVSLAATGVVSGFGAASYELAVEAAAGLAR</sequence>
<name>AROQ_PHEZH</name>
<accession>B4RCS3</accession>
<protein>
    <recommendedName>
        <fullName evidence="1">3-dehydroquinate dehydratase</fullName>
        <shortName evidence="1">3-dehydroquinase</shortName>
        <ecNumber evidence="1">4.2.1.10</ecNumber>
    </recommendedName>
    <alternativeName>
        <fullName evidence="1">Type II DHQase</fullName>
    </alternativeName>
</protein>